<reference key="1">
    <citation type="submission" date="2008-10" db="EMBL/GenBank/DDBJ databases">
        <title>Genome sequence of Bacillus cereus AH187.</title>
        <authorList>
            <person name="Dodson R.J."/>
            <person name="Durkin A.S."/>
            <person name="Rosovitz M.J."/>
            <person name="Rasko D.A."/>
            <person name="Kolsto A.B."/>
            <person name="Okstad O.A."/>
            <person name="Ravel J."/>
            <person name="Sutton G."/>
        </authorList>
    </citation>
    <scope>NUCLEOTIDE SEQUENCE [LARGE SCALE GENOMIC DNA]</scope>
    <source>
        <strain>AH187</strain>
    </source>
</reference>
<protein>
    <recommendedName>
        <fullName evidence="1">5-methylthioadenosine/S-adenosylhomocysteine deaminase</fullName>
        <shortName evidence="1">MTA/SAH deaminase</shortName>
        <ecNumber evidence="1">3.5.4.28</ecNumber>
        <ecNumber evidence="1">3.5.4.31</ecNumber>
    </recommendedName>
</protein>
<feature type="chain" id="PRO_1000140348" description="5-methylthioadenosine/S-adenosylhomocysteine deaminase">
    <location>
        <begin position="1"/>
        <end position="435"/>
    </location>
</feature>
<feature type="binding site" evidence="1">
    <location>
        <position position="65"/>
    </location>
    <ligand>
        <name>Zn(2+)</name>
        <dbReference type="ChEBI" id="CHEBI:29105"/>
    </ligand>
</feature>
<feature type="binding site" evidence="1">
    <location>
        <position position="67"/>
    </location>
    <ligand>
        <name>Zn(2+)</name>
        <dbReference type="ChEBI" id="CHEBI:29105"/>
    </ligand>
</feature>
<feature type="binding site" evidence="1">
    <location>
        <position position="94"/>
    </location>
    <ligand>
        <name>substrate</name>
    </ligand>
</feature>
<feature type="binding site" evidence="1">
    <location>
        <position position="150"/>
    </location>
    <ligand>
        <name>substrate</name>
    </ligand>
</feature>
<feature type="binding site" evidence="1">
    <location>
        <position position="189"/>
    </location>
    <ligand>
        <name>substrate</name>
    </ligand>
</feature>
<feature type="binding site" evidence="1">
    <location>
        <position position="216"/>
    </location>
    <ligand>
        <name>Zn(2+)</name>
        <dbReference type="ChEBI" id="CHEBI:29105"/>
    </ligand>
</feature>
<feature type="binding site" evidence="1">
    <location>
        <position position="219"/>
    </location>
    <ligand>
        <name>substrate</name>
    </ligand>
</feature>
<feature type="binding site" evidence="1">
    <location>
        <position position="304"/>
    </location>
    <ligand>
        <name>substrate</name>
    </ligand>
</feature>
<feature type="binding site" evidence="1">
    <location>
        <position position="304"/>
    </location>
    <ligand>
        <name>Zn(2+)</name>
        <dbReference type="ChEBI" id="CHEBI:29105"/>
    </ligand>
</feature>
<dbReference type="EC" id="3.5.4.28" evidence="1"/>
<dbReference type="EC" id="3.5.4.31" evidence="1"/>
<dbReference type="EMBL" id="CP001177">
    <property type="protein sequence ID" value="ACJ81336.1"/>
    <property type="molecule type" value="Genomic_DNA"/>
</dbReference>
<dbReference type="SMR" id="B7HMN9"/>
<dbReference type="KEGG" id="bcr:BCAH187_A1981"/>
<dbReference type="HOGENOM" id="CLU_012358_2_1_9"/>
<dbReference type="Proteomes" id="UP000002214">
    <property type="component" value="Chromosome"/>
</dbReference>
<dbReference type="GO" id="GO:0090614">
    <property type="term" value="F:5'-methylthioadenosine deaminase activity"/>
    <property type="evidence" value="ECO:0007669"/>
    <property type="project" value="UniProtKB-UniRule"/>
</dbReference>
<dbReference type="GO" id="GO:0046872">
    <property type="term" value="F:metal ion binding"/>
    <property type="evidence" value="ECO:0007669"/>
    <property type="project" value="UniProtKB-KW"/>
</dbReference>
<dbReference type="GO" id="GO:0050270">
    <property type="term" value="F:S-adenosylhomocysteine deaminase activity"/>
    <property type="evidence" value="ECO:0007669"/>
    <property type="project" value="UniProtKB-UniRule"/>
</dbReference>
<dbReference type="CDD" id="cd01298">
    <property type="entry name" value="ATZ_TRZ_like"/>
    <property type="match status" value="1"/>
</dbReference>
<dbReference type="FunFam" id="3.20.20.140:FF:000014">
    <property type="entry name" value="5-methylthioadenosine/S-adenosylhomocysteine deaminase"/>
    <property type="match status" value="1"/>
</dbReference>
<dbReference type="Gene3D" id="3.20.20.140">
    <property type="entry name" value="Metal-dependent hydrolases"/>
    <property type="match status" value="1"/>
</dbReference>
<dbReference type="Gene3D" id="2.30.40.10">
    <property type="entry name" value="Urease, subunit C, domain 1"/>
    <property type="match status" value="1"/>
</dbReference>
<dbReference type="HAMAP" id="MF_01281">
    <property type="entry name" value="MTA_SAH_deamin"/>
    <property type="match status" value="1"/>
</dbReference>
<dbReference type="InterPro" id="IPR006680">
    <property type="entry name" value="Amidohydro-rel"/>
</dbReference>
<dbReference type="InterPro" id="IPR023512">
    <property type="entry name" value="Deaminase_MtaD/DadD"/>
</dbReference>
<dbReference type="InterPro" id="IPR011059">
    <property type="entry name" value="Metal-dep_hydrolase_composite"/>
</dbReference>
<dbReference type="InterPro" id="IPR032466">
    <property type="entry name" value="Metal_Hydrolase"/>
</dbReference>
<dbReference type="InterPro" id="IPR050287">
    <property type="entry name" value="MTA/SAH_deaminase"/>
</dbReference>
<dbReference type="NCBIfam" id="NF012037">
    <property type="entry name" value="PRK15493.1"/>
    <property type="match status" value="1"/>
</dbReference>
<dbReference type="PANTHER" id="PTHR43794:SF11">
    <property type="entry name" value="AMIDOHYDROLASE-RELATED DOMAIN-CONTAINING PROTEIN"/>
    <property type="match status" value="1"/>
</dbReference>
<dbReference type="PANTHER" id="PTHR43794">
    <property type="entry name" value="AMINOHYDROLASE SSNA-RELATED"/>
    <property type="match status" value="1"/>
</dbReference>
<dbReference type="Pfam" id="PF01979">
    <property type="entry name" value="Amidohydro_1"/>
    <property type="match status" value="1"/>
</dbReference>
<dbReference type="SUPFAM" id="SSF51338">
    <property type="entry name" value="Composite domain of metallo-dependent hydrolases"/>
    <property type="match status" value="1"/>
</dbReference>
<dbReference type="SUPFAM" id="SSF51556">
    <property type="entry name" value="Metallo-dependent hydrolases"/>
    <property type="match status" value="1"/>
</dbReference>
<accession>B7HMN9</accession>
<proteinExistence type="inferred from homology"/>
<organism>
    <name type="scientific">Bacillus cereus (strain AH187)</name>
    <dbReference type="NCBI Taxonomy" id="405534"/>
    <lineage>
        <taxon>Bacteria</taxon>
        <taxon>Bacillati</taxon>
        <taxon>Bacillota</taxon>
        <taxon>Bacilli</taxon>
        <taxon>Bacillales</taxon>
        <taxon>Bacillaceae</taxon>
        <taxon>Bacillus</taxon>
        <taxon>Bacillus cereus group</taxon>
    </lineage>
</organism>
<keyword id="KW-0378">Hydrolase</keyword>
<keyword id="KW-0479">Metal-binding</keyword>
<keyword id="KW-0862">Zinc</keyword>
<name>MTAD_BACC7</name>
<evidence type="ECO:0000255" key="1">
    <source>
        <dbReference type="HAMAP-Rule" id="MF_01281"/>
    </source>
</evidence>
<comment type="function">
    <text evidence="1">Catalyzes the deamination of 5-methylthioadenosine and S-adenosyl-L-homocysteine into 5-methylthioinosine and S-inosyl-L-homocysteine, respectively. Is also able to deaminate adenosine.</text>
</comment>
<comment type="catalytic activity">
    <reaction evidence="1">
        <text>S-adenosyl-L-homocysteine + H2O + H(+) = S-inosyl-L-homocysteine + NH4(+)</text>
        <dbReference type="Rhea" id="RHEA:20716"/>
        <dbReference type="ChEBI" id="CHEBI:15377"/>
        <dbReference type="ChEBI" id="CHEBI:15378"/>
        <dbReference type="ChEBI" id="CHEBI:28938"/>
        <dbReference type="ChEBI" id="CHEBI:57856"/>
        <dbReference type="ChEBI" id="CHEBI:57985"/>
        <dbReference type="EC" id="3.5.4.28"/>
    </reaction>
</comment>
<comment type="catalytic activity">
    <reaction evidence="1">
        <text>S-methyl-5'-thioadenosine + H2O + H(+) = S-methyl-5'-thioinosine + NH4(+)</text>
        <dbReference type="Rhea" id="RHEA:25025"/>
        <dbReference type="ChEBI" id="CHEBI:15377"/>
        <dbReference type="ChEBI" id="CHEBI:15378"/>
        <dbReference type="ChEBI" id="CHEBI:17509"/>
        <dbReference type="ChEBI" id="CHEBI:28938"/>
        <dbReference type="ChEBI" id="CHEBI:48595"/>
        <dbReference type="EC" id="3.5.4.31"/>
    </reaction>
</comment>
<comment type="cofactor">
    <cofactor evidence="1">
        <name>Zn(2+)</name>
        <dbReference type="ChEBI" id="CHEBI:29105"/>
    </cofactor>
    <text evidence="1">Binds 1 zinc ion per subunit.</text>
</comment>
<comment type="similarity">
    <text evidence="1">Belongs to the metallo-dependent hydrolases superfamily. MTA/SAH deaminase family.</text>
</comment>
<gene>
    <name evidence="1" type="primary">mtaD</name>
    <name type="ordered locus">BCAH187_A1981</name>
</gene>
<sequence length="435" mass="48153">MKTTYVNATIVTMNEQNEVIENGYIIVENDQIIDVKSGEFANDFEVDEVIDMKGKWVLPGLVNTHTHVVMSLLRGIGDDMLLQPWLETRIWPLESQFTPELAVASTELGLLEMVKSGTTSFSDMFNPIGVDQDAIMETVSRSGMRAAVSRTLFSFGTKEDEKKAIEEAEKYVKRYYNESGMLTTMVAPHSPYTCSTELLEECARIAVENQTMVHIHLSETEREVRDIEAKYGKRPVEYAASCGLFKRPTVIAHGVVLNDNERAFLAEHDVRVAHNPNSNLKLGSGIANVKAMLEAGIKVGIATDSVASNNNLDMFEEMRIATLLQKGIHQDATALPVETALTLATKGAAEVIGMKQTGSLEIGKCADFITIDPSNKPHLQPADEVLSHLVYAASGKDISDVIINGKRVVWNGECKTLDEERIIFEASRYKRGLQR</sequence>